<feature type="chain" id="PRO_0000335422" description="Ribosomal RNA small subunit methyltransferase G">
    <location>
        <begin position="1"/>
        <end position="203"/>
    </location>
</feature>
<feature type="binding site" evidence="1">
    <location>
        <position position="75"/>
    </location>
    <ligand>
        <name>S-adenosyl-L-methionine</name>
        <dbReference type="ChEBI" id="CHEBI:59789"/>
    </ligand>
</feature>
<feature type="binding site" evidence="1">
    <location>
        <position position="80"/>
    </location>
    <ligand>
        <name>S-adenosyl-L-methionine</name>
        <dbReference type="ChEBI" id="CHEBI:59789"/>
    </ligand>
</feature>
<feature type="binding site" evidence="1">
    <location>
        <begin position="126"/>
        <end position="127"/>
    </location>
    <ligand>
        <name>S-adenosyl-L-methionine</name>
        <dbReference type="ChEBI" id="CHEBI:59789"/>
    </ligand>
</feature>
<feature type="binding site" evidence="1">
    <location>
        <position position="141"/>
    </location>
    <ligand>
        <name>S-adenosyl-L-methionine</name>
        <dbReference type="ChEBI" id="CHEBI:59789"/>
    </ligand>
</feature>
<keyword id="KW-0963">Cytoplasm</keyword>
<keyword id="KW-0489">Methyltransferase</keyword>
<keyword id="KW-0698">rRNA processing</keyword>
<keyword id="KW-0949">S-adenosyl-L-methionine</keyword>
<keyword id="KW-0808">Transferase</keyword>
<name>RSMG_RUTMC</name>
<sequence length="203" mass="23221">MNSEVLLIEGASLMNIKLESEQISKLMNYLKLIIKWNKSYNLSAIRTMEKGVYKHLLDSLSVIAYIKDKSLLDVGSGAGLPGIVISIMRPELLVTVLDTVGKKCRFMQFAKTQLQLKNLNVIKNRVENYQIEFCFEQIISRAFSKVEKILKLTQHLLCNNGEYLLMKGAGFQQETLPYGVDIQSLCVPEILGKRYLLIFRREK</sequence>
<protein>
    <recommendedName>
        <fullName evidence="1">Ribosomal RNA small subunit methyltransferase G</fullName>
        <ecNumber evidence="1">2.1.1.170</ecNumber>
    </recommendedName>
    <alternativeName>
        <fullName evidence="1">16S rRNA 7-methylguanosine methyltransferase</fullName>
        <shortName evidence="1">16S rRNA m7G methyltransferase</shortName>
    </alternativeName>
</protein>
<evidence type="ECO:0000255" key="1">
    <source>
        <dbReference type="HAMAP-Rule" id="MF_00074"/>
    </source>
</evidence>
<evidence type="ECO:0000305" key="2"/>
<gene>
    <name evidence="1" type="primary">rsmG</name>
    <name type="ordered locus">Rmag_0069</name>
</gene>
<proteinExistence type="inferred from homology"/>
<dbReference type="EC" id="2.1.1.170" evidence="1"/>
<dbReference type="EMBL" id="CP000488">
    <property type="protein sequence ID" value="ABL01869.1"/>
    <property type="status" value="ALT_INIT"/>
    <property type="molecule type" value="Genomic_DNA"/>
</dbReference>
<dbReference type="SMR" id="A1AVB2"/>
<dbReference type="STRING" id="413404.Rmag_0069"/>
<dbReference type="KEGG" id="rma:Rmag_0069"/>
<dbReference type="eggNOG" id="COG0357">
    <property type="taxonomic scope" value="Bacteria"/>
</dbReference>
<dbReference type="HOGENOM" id="CLU_065341_2_2_6"/>
<dbReference type="OrthoDB" id="9808773at2"/>
<dbReference type="Proteomes" id="UP000002587">
    <property type="component" value="Chromosome"/>
</dbReference>
<dbReference type="GO" id="GO:0005829">
    <property type="term" value="C:cytosol"/>
    <property type="evidence" value="ECO:0007669"/>
    <property type="project" value="TreeGrafter"/>
</dbReference>
<dbReference type="GO" id="GO:0070043">
    <property type="term" value="F:rRNA (guanine-N7-)-methyltransferase activity"/>
    <property type="evidence" value="ECO:0007669"/>
    <property type="project" value="UniProtKB-UniRule"/>
</dbReference>
<dbReference type="Gene3D" id="3.40.50.150">
    <property type="entry name" value="Vaccinia Virus protein VP39"/>
    <property type="match status" value="1"/>
</dbReference>
<dbReference type="HAMAP" id="MF_00074">
    <property type="entry name" value="16SrRNA_methyltr_G"/>
    <property type="match status" value="1"/>
</dbReference>
<dbReference type="InterPro" id="IPR003682">
    <property type="entry name" value="rRNA_ssu_MeTfrase_G"/>
</dbReference>
<dbReference type="InterPro" id="IPR029063">
    <property type="entry name" value="SAM-dependent_MTases_sf"/>
</dbReference>
<dbReference type="NCBIfam" id="TIGR00138">
    <property type="entry name" value="rsmG_gidB"/>
    <property type="match status" value="1"/>
</dbReference>
<dbReference type="PANTHER" id="PTHR31760">
    <property type="entry name" value="S-ADENOSYL-L-METHIONINE-DEPENDENT METHYLTRANSFERASES SUPERFAMILY PROTEIN"/>
    <property type="match status" value="1"/>
</dbReference>
<dbReference type="PANTHER" id="PTHR31760:SF0">
    <property type="entry name" value="S-ADENOSYL-L-METHIONINE-DEPENDENT METHYLTRANSFERASES SUPERFAMILY PROTEIN"/>
    <property type="match status" value="1"/>
</dbReference>
<dbReference type="Pfam" id="PF02527">
    <property type="entry name" value="GidB"/>
    <property type="match status" value="1"/>
</dbReference>
<dbReference type="PIRSF" id="PIRSF003078">
    <property type="entry name" value="GidB"/>
    <property type="match status" value="1"/>
</dbReference>
<dbReference type="SUPFAM" id="SSF53335">
    <property type="entry name" value="S-adenosyl-L-methionine-dependent methyltransferases"/>
    <property type="match status" value="1"/>
</dbReference>
<reference key="1">
    <citation type="journal article" date="2007" name="Science">
        <title>The Calyptogena magnifica chemoautotrophic symbiont genome.</title>
        <authorList>
            <person name="Newton I.L.G."/>
            <person name="Woyke T."/>
            <person name="Auchtung T.A."/>
            <person name="Dilly G.F."/>
            <person name="Dutton R.J."/>
            <person name="Fisher M.C."/>
            <person name="Fontanez K.M."/>
            <person name="Lau E."/>
            <person name="Stewart F.J."/>
            <person name="Richardson P.M."/>
            <person name="Barry K.W."/>
            <person name="Saunders E."/>
            <person name="Detter J.C."/>
            <person name="Wu D."/>
            <person name="Eisen J.A."/>
            <person name="Cavanaugh C.M."/>
        </authorList>
    </citation>
    <scope>NUCLEOTIDE SEQUENCE [LARGE SCALE GENOMIC DNA]</scope>
</reference>
<organism>
    <name type="scientific">Ruthia magnifica subsp. Calyptogena magnifica</name>
    <dbReference type="NCBI Taxonomy" id="413404"/>
    <lineage>
        <taxon>Bacteria</taxon>
        <taxon>Pseudomonadati</taxon>
        <taxon>Pseudomonadota</taxon>
        <taxon>Gammaproteobacteria</taxon>
        <taxon>Candidatus Pseudothioglobaceae</taxon>
        <taxon>Candidatus Ruthturnera</taxon>
    </lineage>
</organism>
<accession>A1AVB2</accession>
<comment type="function">
    <text evidence="1">Specifically methylates the N7 position of guanine in position 527 of 16S rRNA.</text>
</comment>
<comment type="catalytic activity">
    <reaction evidence="1">
        <text>guanosine(527) in 16S rRNA + S-adenosyl-L-methionine = N(7)-methylguanosine(527) in 16S rRNA + S-adenosyl-L-homocysteine</text>
        <dbReference type="Rhea" id="RHEA:42732"/>
        <dbReference type="Rhea" id="RHEA-COMP:10209"/>
        <dbReference type="Rhea" id="RHEA-COMP:10210"/>
        <dbReference type="ChEBI" id="CHEBI:57856"/>
        <dbReference type="ChEBI" id="CHEBI:59789"/>
        <dbReference type="ChEBI" id="CHEBI:74269"/>
        <dbReference type="ChEBI" id="CHEBI:74480"/>
        <dbReference type="EC" id="2.1.1.170"/>
    </reaction>
</comment>
<comment type="subcellular location">
    <subcellularLocation>
        <location evidence="1">Cytoplasm</location>
    </subcellularLocation>
</comment>
<comment type="similarity">
    <text evidence="1">Belongs to the methyltransferase superfamily. RNA methyltransferase RsmG family.</text>
</comment>
<comment type="sequence caution" evidence="2">
    <conflict type="erroneous initiation">
        <sequence resource="EMBL-CDS" id="ABL01869"/>
    </conflict>
</comment>